<comment type="function">
    <text evidence="1">Sulfur carrier protein involved in sulfur trafficking in the cell. Part of a sulfur-relay system required for 2-thiolation during synthesis of 2-thiouridine of the modified wobble base 5-methylaminomethyl-2-thiouridine (mnm(5)s(2)U) in tRNA. Interacts with IscS and stimulates its cysteine desulfurase activity. Accepts an activated sulfur from IscS, which is then transferred to TusD, and thus determines the direction of sulfur flow from IscS to 2-thiouridine formation. Also appears to be involved in sulfur transfer for the biosynthesis of molybdopterin.</text>
</comment>
<comment type="pathway">
    <text evidence="1">tRNA modification.</text>
</comment>
<comment type="subunit">
    <text evidence="1">Interacts with IscS.</text>
</comment>
<comment type="subcellular location">
    <subcellularLocation>
        <location evidence="1">Cytoplasm</location>
    </subcellularLocation>
</comment>
<comment type="similarity">
    <text evidence="1">Belongs to the sulfur carrier protein TusA family.</text>
</comment>
<feature type="chain" id="PRO_1000199916" description="Sulfur carrier protein TusA">
    <location>
        <begin position="1"/>
        <end position="81"/>
    </location>
</feature>
<feature type="active site" description="Cysteine persulfide intermediate" evidence="1">
    <location>
        <position position="19"/>
    </location>
</feature>
<evidence type="ECO:0000255" key="1">
    <source>
        <dbReference type="HAMAP-Rule" id="MF_00413"/>
    </source>
</evidence>
<name>TUSA_ECO5E</name>
<proteinExistence type="inferred from homology"/>
<organism>
    <name type="scientific">Escherichia coli O157:H7 (strain EC4115 / EHEC)</name>
    <dbReference type="NCBI Taxonomy" id="444450"/>
    <lineage>
        <taxon>Bacteria</taxon>
        <taxon>Pseudomonadati</taxon>
        <taxon>Pseudomonadota</taxon>
        <taxon>Gammaproteobacteria</taxon>
        <taxon>Enterobacterales</taxon>
        <taxon>Enterobacteriaceae</taxon>
        <taxon>Escherichia</taxon>
    </lineage>
</organism>
<accession>B5YUM9</accession>
<protein>
    <recommendedName>
        <fullName evidence="1">Sulfur carrier protein TusA</fullName>
    </recommendedName>
    <alternativeName>
        <fullName evidence="1">Sulfur mediator TusA</fullName>
    </alternativeName>
    <alternativeName>
        <fullName evidence="1">Sulfur transfer protein TusA</fullName>
    </alternativeName>
    <alternativeName>
        <fullName evidence="1">tRNA 2-thiouridine synthesizing protein A</fullName>
    </alternativeName>
</protein>
<reference key="1">
    <citation type="journal article" date="2011" name="Proc. Natl. Acad. Sci. U.S.A.">
        <title>Genomic anatomy of Escherichia coli O157:H7 outbreaks.</title>
        <authorList>
            <person name="Eppinger M."/>
            <person name="Mammel M.K."/>
            <person name="Leclerc J.E."/>
            <person name="Ravel J."/>
            <person name="Cebula T.A."/>
        </authorList>
    </citation>
    <scope>NUCLEOTIDE SEQUENCE [LARGE SCALE GENOMIC DNA]</scope>
    <source>
        <strain>EC4115 / EHEC</strain>
    </source>
</reference>
<sequence>MTDLFSSPDHTLDALGLRCPEPVMMVRKTVRNMQPGETLLIIADDPATTRDIPGFCTFMEHELVAKETDGLPYRYLIRKGG</sequence>
<dbReference type="EMBL" id="CP001164">
    <property type="protein sequence ID" value="ACI38819.1"/>
    <property type="molecule type" value="Genomic_DNA"/>
</dbReference>
<dbReference type="RefSeq" id="WP_000130621.1">
    <property type="nucleotide sequence ID" value="NC_011353.1"/>
</dbReference>
<dbReference type="SMR" id="B5YUM9"/>
<dbReference type="GeneID" id="93778521"/>
<dbReference type="KEGG" id="ecf:ECH74115_4790"/>
<dbReference type="HOGENOM" id="CLU_165255_5_0_6"/>
<dbReference type="GO" id="GO:0005737">
    <property type="term" value="C:cytoplasm"/>
    <property type="evidence" value="ECO:0007669"/>
    <property type="project" value="UniProtKB-SubCell"/>
</dbReference>
<dbReference type="GO" id="GO:0097163">
    <property type="term" value="F:sulfur carrier activity"/>
    <property type="evidence" value="ECO:0007669"/>
    <property type="project" value="UniProtKB-UniRule"/>
</dbReference>
<dbReference type="GO" id="GO:0002143">
    <property type="term" value="P:tRNA wobble position uridine thiolation"/>
    <property type="evidence" value="ECO:0007669"/>
    <property type="project" value="InterPro"/>
</dbReference>
<dbReference type="CDD" id="cd03423">
    <property type="entry name" value="SirA"/>
    <property type="match status" value="1"/>
</dbReference>
<dbReference type="FunFam" id="3.30.110.40:FF:000002">
    <property type="entry name" value="Sulfur carrier protein TusA"/>
    <property type="match status" value="1"/>
</dbReference>
<dbReference type="Gene3D" id="3.30.110.40">
    <property type="entry name" value="TusA-like domain"/>
    <property type="match status" value="1"/>
</dbReference>
<dbReference type="HAMAP" id="MF_00413">
    <property type="entry name" value="Thiourid_synth_A"/>
    <property type="match status" value="1"/>
</dbReference>
<dbReference type="InterPro" id="IPR022931">
    <property type="entry name" value="Sulphur_carrier_TusA"/>
</dbReference>
<dbReference type="InterPro" id="IPR001455">
    <property type="entry name" value="TusA-like"/>
</dbReference>
<dbReference type="InterPro" id="IPR036868">
    <property type="entry name" value="TusA-like_sf"/>
</dbReference>
<dbReference type="NCBIfam" id="NF001423">
    <property type="entry name" value="PRK00299.1"/>
    <property type="match status" value="1"/>
</dbReference>
<dbReference type="PANTHER" id="PTHR33279:SF2">
    <property type="entry name" value="SULFUR CARRIER PROTEIN TUSA"/>
    <property type="match status" value="1"/>
</dbReference>
<dbReference type="PANTHER" id="PTHR33279">
    <property type="entry name" value="SULFUR CARRIER PROTEIN YEDF-RELATED"/>
    <property type="match status" value="1"/>
</dbReference>
<dbReference type="Pfam" id="PF01206">
    <property type="entry name" value="TusA"/>
    <property type="match status" value="1"/>
</dbReference>
<dbReference type="SUPFAM" id="SSF64307">
    <property type="entry name" value="SirA-like"/>
    <property type="match status" value="1"/>
</dbReference>
<dbReference type="PROSITE" id="PS01148">
    <property type="entry name" value="UPF0033"/>
    <property type="match status" value="1"/>
</dbReference>
<gene>
    <name evidence="1" type="primary">tusA</name>
    <name type="ordered locus">ECH74115_4790</name>
</gene>
<keyword id="KW-0963">Cytoplasm</keyword>
<keyword id="KW-0819">tRNA processing</keyword>